<sequence length="251" mass="28073">MVDKSQETTHFGFQTVAKEQKADMVAHVFHSVASKYDVMNDLMSFGIHRLWKRFTIDCSGVRRGQTVLDLAGGTGDLTAKFSRLVGETGKVVLADINESMLKMGREKLRNIGVIGNVEYVQANAEALPFPDNTFDCITISFGLRNVTDKDKALRSMYRVLKPGGRLLVLEFSKPIIEPLSKAYDAYSFHVLPRIGSLVANDADSYRYLAESIRMHPDQDTLKAMMQDAGFESVDYYNLTAGVVALHRGYKF</sequence>
<name>UBIE_ECO27</name>
<feature type="chain" id="PRO_1000187754" description="Ubiquinone/menaquinone biosynthesis C-methyltransferase UbiE">
    <location>
        <begin position="1"/>
        <end position="251"/>
    </location>
</feature>
<feature type="binding site" evidence="1">
    <location>
        <position position="74"/>
    </location>
    <ligand>
        <name>S-adenosyl-L-methionine</name>
        <dbReference type="ChEBI" id="CHEBI:59789"/>
    </ligand>
</feature>
<feature type="binding site" evidence="1">
    <location>
        <position position="95"/>
    </location>
    <ligand>
        <name>S-adenosyl-L-methionine</name>
        <dbReference type="ChEBI" id="CHEBI:59789"/>
    </ligand>
</feature>
<feature type="binding site" evidence="1">
    <location>
        <begin position="123"/>
        <end position="124"/>
    </location>
    <ligand>
        <name>S-adenosyl-L-methionine</name>
        <dbReference type="ChEBI" id="CHEBI:59789"/>
    </ligand>
</feature>
<feature type="binding site" evidence="1">
    <location>
        <position position="140"/>
    </location>
    <ligand>
        <name>S-adenosyl-L-methionine</name>
        <dbReference type="ChEBI" id="CHEBI:59789"/>
    </ligand>
</feature>
<evidence type="ECO:0000255" key="1">
    <source>
        <dbReference type="HAMAP-Rule" id="MF_01813"/>
    </source>
</evidence>
<dbReference type="EC" id="2.1.1.163" evidence="1"/>
<dbReference type="EC" id="2.1.1.201" evidence="1"/>
<dbReference type="EMBL" id="FM180568">
    <property type="protein sequence ID" value="CAS11695.1"/>
    <property type="molecule type" value="Genomic_DNA"/>
</dbReference>
<dbReference type="RefSeq" id="WP_000227958.1">
    <property type="nucleotide sequence ID" value="NC_011601.1"/>
</dbReference>
<dbReference type="SMR" id="B7UNG3"/>
<dbReference type="GeneID" id="93778102"/>
<dbReference type="KEGG" id="ecg:E2348C_4147"/>
<dbReference type="HOGENOM" id="CLU_037990_0_0_6"/>
<dbReference type="UniPathway" id="UPA00079">
    <property type="reaction ID" value="UER00169"/>
</dbReference>
<dbReference type="UniPathway" id="UPA00232"/>
<dbReference type="Proteomes" id="UP000008205">
    <property type="component" value="Chromosome"/>
</dbReference>
<dbReference type="GO" id="GO:0008425">
    <property type="term" value="F:2-methoxy-6-polyprenyl-1,4-benzoquinol methyltransferase activity"/>
    <property type="evidence" value="ECO:0007669"/>
    <property type="project" value="UniProtKB-UniRule"/>
</dbReference>
<dbReference type="GO" id="GO:0043770">
    <property type="term" value="F:demethylmenaquinone methyltransferase activity"/>
    <property type="evidence" value="ECO:0007669"/>
    <property type="project" value="UniProtKB-UniRule"/>
</dbReference>
<dbReference type="GO" id="GO:0009060">
    <property type="term" value="P:aerobic respiration"/>
    <property type="evidence" value="ECO:0007669"/>
    <property type="project" value="UniProtKB-UniRule"/>
</dbReference>
<dbReference type="GO" id="GO:0009234">
    <property type="term" value="P:menaquinone biosynthetic process"/>
    <property type="evidence" value="ECO:0007669"/>
    <property type="project" value="UniProtKB-UniRule"/>
</dbReference>
<dbReference type="GO" id="GO:0032259">
    <property type="term" value="P:methylation"/>
    <property type="evidence" value="ECO:0007669"/>
    <property type="project" value="UniProtKB-KW"/>
</dbReference>
<dbReference type="CDD" id="cd02440">
    <property type="entry name" value="AdoMet_MTases"/>
    <property type="match status" value="1"/>
</dbReference>
<dbReference type="FunFam" id="3.40.50.150:FF:000014">
    <property type="entry name" value="Ubiquinone/menaquinone biosynthesis C-methyltransferase UbiE"/>
    <property type="match status" value="1"/>
</dbReference>
<dbReference type="Gene3D" id="3.40.50.150">
    <property type="entry name" value="Vaccinia Virus protein VP39"/>
    <property type="match status" value="1"/>
</dbReference>
<dbReference type="HAMAP" id="MF_01813">
    <property type="entry name" value="MenG_UbiE_methyltr"/>
    <property type="match status" value="1"/>
</dbReference>
<dbReference type="InterPro" id="IPR029063">
    <property type="entry name" value="SAM-dependent_MTases_sf"/>
</dbReference>
<dbReference type="InterPro" id="IPR004033">
    <property type="entry name" value="UbiE/COQ5_MeTrFase"/>
</dbReference>
<dbReference type="InterPro" id="IPR023576">
    <property type="entry name" value="UbiE/COQ5_MeTrFase_CS"/>
</dbReference>
<dbReference type="NCBIfam" id="TIGR01934">
    <property type="entry name" value="MenG_MenH_UbiE"/>
    <property type="match status" value="1"/>
</dbReference>
<dbReference type="NCBIfam" id="NF001240">
    <property type="entry name" value="PRK00216.1-1"/>
    <property type="match status" value="1"/>
</dbReference>
<dbReference type="NCBIfam" id="NF001242">
    <property type="entry name" value="PRK00216.1-3"/>
    <property type="match status" value="1"/>
</dbReference>
<dbReference type="NCBIfam" id="NF001244">
    <property type="entry name" value="PRK00216.1-5"/>
    <property type="match status" value="1"/>
</dbReference>
<dbReference type="PANTHER" id="PTHR43591:SF24">
    <property type="entry name" value="2-METHOXY-6-POLYPRENYL-1,4-BENZOQUINOL METHYLASE, MITOCHONDRIAL"/>
    <property type="match status" value="1"/>
</dbReference>
<dbReference type="PANTHER" id="PTHR43591">
    <property type="entry name" value="METHYLTRANSFERASE"/>
    <property type="match status" value="1"/>
</dbReference>
<dbReference type="Pfam" id="PF01209">
    <property type="entry name" value="Ubie_methyltran"/>
    <property type="match status" value="1"/>
</dbReference>
<dbReference type="SUPFAM" id="SSF53335">
    <property type="entry name" value="S-adenosyl-L-methionine-dependent methyltransferases"/>
    <property type="match status" value="1"/>
</dbReference>
<dbReference type="PROSITE" id="PS51608">
    <property type="entry name" value="SAM_MT_UBIE"/>
    <property type="match status" value="1"/>
</dbReference>
<dbReference type="PROSITE" id="PS01183">
    <property type="entry name" value="UBIE_1"/>
    <property type="match status" value="1"/>
</dbReference>
<dbReference type="PROSITE" id="PS01184">
    <property type="entry name" value="UBIE_2"/>
    <property type="match status" value="1"/>
</dbReference>
<organism>
    <name type="scientific">Escherichia coli O127:H6 (strain E2348/69 / EPEC)</name>
    <dbReference type="NCBI Taxonomy" id="574521"/>
    <lineage>
        <taxon>Bacteria</taxon>
        <taxon>Pseudomonadati</taxon>
        <taxon>Pseudomonadota</taxon>
        <taxon>Gammaproteobacteria</taxon>
        <taxon>Enterobacterales</taxon>
        <taxon>Enterobacteriaceae</taxon>
        <taxon>Escherichia</taxon>
    </lineage>
</organism>
<proteinExistence type="inferred from homology"/>
<reference key="1">
    <citation type="journal article" date="2009" name="J. Bacteriol.">
        <title>Complete genome sequence and comparative genome analysis of enteropathogenic Escherichia coli O127:H6 strain E2348/69.</title>
        <authorList>
            <person name="Iguchi A."/>
            <person name="Thomson N.R."/>
            <person name="Ogura Y."/>
            <person name="Saunders D."/>
            <person name="Ooka T."/>
            <person name="Henderson I.R."/>
            <person name="Harris D."/>
            <person name="Asadulghani M."/>
            <person name="Kurokawa K."/>
            <person name="Dean P."/>
            <person name="Kenny B."/>
            <person name="Quail M.A."/>
            <person name="Thurston S."/>
            <person name="Dougan G."/>
            <person name="Hayashi T."/>
            <person name="Parkhill J."/>
            <person name="Frankel G."/>
        </authorList>
    </citation>
    <scope>NUCLEOTIDE SEQUENCE [LARGE SCALE GENOMIC DNA]</scope>
    <source>
        <strain>E2348/69 / EPEC</strain>
    </source>
</reference>
<keyword id="KW-0474">Menaquinone biosynthesis</keyword>
<keyword id="KW-0489">Methyltransferase</keyword>
<keyword id="KW-1185">Reference proteome</keyword>
<keyword id="KW-0949">S-adenosyl-L-methionine</keyword>
<keyword id="KW-0808">Transferase</keyword>
<keyword id="KW-0831">Ubiquinone biosynthesis</keyword>
<accession>B7UNG3</accession>
<protein>
    <recommendedName>
        <fullName evidence="1">Ubiquinone/menaquinone biosynthesis C-methyltransferase UbiE</fullName>
        <ecNumber evidence="1">2.1.1.163</ecNumber>
        <ecNumber evidence="1">2.1.1.201</ecNumber>
    </recommendedName>
    <alternativeName>
        <fullName evidence="1">2-methoxy-6-polyprenyl-1,4-benzoquinol methylase</fullName>
    </alternativeName>
    <alternativeName>
        <fullName evidence="1">Demethylmenaquinone methyltransferase</fullName>
    </alternativeName>
</protein>
<gene>
    <name evidence="1" type="primary">ubiE</name>
    <name type="ordered locus">E2348C_4147</name>
</gene>
<comment type="function">
    <text evidence="1">Methyltransferase required for the conversion of demethylmenaquinol (DMKH2) to menaquinol (MKH2) and the conversion of 2-polyprenyl-6-methoxy-1,4-benzoquinol (DDMQH2) to 2-polyprenyl-3-methyl-6-methoxy-1,4-benzoquinol (DMQH2).</text>
</comment>
<comment type="catalytic activity">
    <reaction evidence="1">
        <text>a 2-demethylmenaquinol + S-adenosyl-L-methionine = a menaquinol + S-adenosyl-L-homocysteine + H(+)</text>
        <dbReference type="Rhea" id="RHEA:42640"/>
        <dbReference type="Rhea" id="RHEA-COMP:9539"/>
        <dbReference type="Rhea" id="RHEA-COMP:9563"/>
        <dbReference type="ChEBI" id="CHEBI:15378"/>
        <dbReference type="ChEBI" id="CHEBI:18151"/>
        <dbReference type="ChEBI" id="CHEBI:55437"/>
        <dbReference type="ChEBI" id="CHEBI:57856"/>
        <dbReference type="ChEBI" id="CHEBI:59789"/>
        <dbReference type="EC" id="2.1.1.163"/>
    </reaction>
</comment>
<comment type="catalytic activity">
    <reaction evidence="1">
        <text>a 2-methoxy-6-(all-trans-polyprenyl)benzene-1,4-diol + S-adenosyl-L-methionine = a 5-methoxy-2-methyl-3-(all-trans-polyprenyl)benzene-1,4-diol + S-adenosyl-L-homocysteine + H(+)</text>
        <dbReference type="Rhea" id="RHEA:28286"/>
        <dbReference type="Rhea" id="RHEA-COMP:10858"/>
        <dbReference type="Rhea" id="RHEA-COMP:10859"/>
        <dbReference type="ChEBI" id="CHEBI:15378"/>
        <dbReference type="ChEBI" id="CHEBI:57856"/>
        <dbReference type="ChEBI" id="CHEBI:59789"/>
        <dbReference type="ChEBI" id="CHEBI:84166"/>
        <dbReference type="ChEBI" id="CHEBI:84167"/>
        <dbReference type="EC" id="2.1.1.201"/>
    </reaction>
</comment>
<comment type="pathway">
    <text evidence="1">Quinol/quinone metabolism; menaquinone biosynthesis; menaquinol from 1,4-dihydroxy-2-naphthoate: step 2/2.</text>
</comment>
<comment type="pathway">
    <text evidence="1">Cofactor biosynthesis; ubiquinone biosynthesis.</text>
</comment>
<comment type="similarity">
    <text evidence="1">Belongs to the class I-like SAM-binding methyltransferase superfamily. MenG/UbiE family.</text>
</comment>